<comment type="function">
    <text evidence="1">Regulates membrane-cell wall junctions and localized cell wall deposition. Required for establishment of the Casparian strip membrane domain (CSD) and the subsequent formation of Casparian strips, a cell wall modification of the root endodermis that determines an apoplastic barrier between the intraorganismal apoplasm and the extraorganismal apoplasm and prevents lateral diffusion (By similarity).</text>
</comment>
<comment type="subunit">
    <text evidence="1">Homodimer and heterodimers.</text>
</comment>
<comment type="subcellular location">
    <subcellularLocation>
        <location evidence="1">Cell membrane</location>
        <topology evidence="1">Multi-pass membrane protein</topology>
    </subcellularLocation>
    <text evidence="1">Very restricted localization following a belt shape within the plasma membrane which coincides with the position of the Casparian strip membrane domain in the root endodermis.</text>
</comment>
<comment type="similarity">
    <text evidence="4">Belongs to the Casparian strip membrane proteins (CASP) family.</text>
</comment>
<name>CASP2_MEDTR</name>
<keyword id="KW-1003">Cell membrane</keyword>
<keyword id="KW-0961">Cell wall biogenesis/degradation</keyword>
<keyword id="KW-0472">Membrane</keyword>
<keyword id="KW-1185">Reference proteome</keyword>
<keyword id="KW-0812">Transmembrane</keyword>
<keyword id="KW-1133">Transmembrane helix</keyword>
<protein>
    <recommendedName>
        <fullName>Casparian strip membrane protein 2</fullName>
        <shortName>MtCASP2</shortName>
    </recommendedName>
</protein>
<evidence type="ECO:0000250" key="1"/>
<evidence type="ECO:0000255" key="2"/>
<evidence type="ECO:0000256" key="3">
    <source>
        <dbReference type="SAM" id="MobiDB-lite"/>
    </source>
</evidence>
<evidence type="ECO:0000305" key="4"/>
<gene>
    <name type="ordered locus">MTR_4g081880</name>
</gene>
<organism>
    <name type="scientific">Medicago truncatula</name>
    <name type="common">Barrel medic</name>
    <name type="synonym">Medicago tribuloides</name>
    <dbReference type="NCBI Taxonomy" id="3880"/>
    <lineage>
        <taxon>Eukaryota</taxon>
        <taxon>Viridiplantae</taxon>
        <taxon>Streptophyta</taxon>
        <taxon>Embryophyta</taxon>
        <taxon>Tracheophyta</taxon>
        <taxon>Spermatophyta</taxon>
        <taxon>Magnoliopsida</taxon>
        <taxon>eudicotyledons</taxon>
        <taxon>Gunneridae</taxon>
        <taxon>Pentapetalae</taxon>
        <taxon>rosids</taxon>
        <taxon>fabids</taxon>
        <taxon>Fabales</taxon>
        <taxon>Fabaceae</taxon>
        <taxon>Papilionoideae</taxon>
        <taxon>50 kb inversion clade</taxon>
        <taxon>NPAAA clade</taxon>
        <taxon>Hologalegina</taxon>
        <taxon>IRL clade</taxon>
        <taxon>Trifolieae</taxon>
        <taxon>Medicago</taxon>
    </lineage>
</organism>
<dbReference type="EMBL" id="CM001220">
    <property type="protein sequence ID" value="AES89929.1"/>
    <property type="molecule type" value="Genomic_DNA"/>
</dbReference>
<dbReference type="RefSeq" id="XP_003607732.1">
    <property type="nucleotide sequence ID" value="XM_003607684.2"/>
</dbReference>
<dbReference type="SMR" id="G7JG80"/>
<dbReference type="STRING" id="3880.G7JG80"/>
<dbReference type="PaxDb" id="3880-AES89929"/>
<dbReference type="KEGG" id="mtr:11446913"/>
<dbReference type="eggNOG" id="ENOG502RXTK">
    <property type="taxonomic scope" value="Eukaryota"/>
</dbReference>
<dbReference type="HOGENOM" id="CLU_066104_3_2_1"/>
<dbReference type="OMA" id="ANWFAVC"/>
<dbReference type="OrthoDB" id="753675at2759"/>
<dbReference type="Proteomes" id="UP000002051">
    <property type="component" value="Chromosome 4"/>
</dbReference>
<dbReference type="ExpressionAtlas" id="G7JG80">
    <property type="expression patterns" value="differential"/>
</dbReference>
<dbReference type="GO" id="GO:0005886">
    <property type="term" value="C:plasma membrane"/>
    <property type="evidence" value="ECO:0000318"/>
    <property type="project" value="GO_Central"/>
</dbReference>
<dbReference type="GO" id="GO:0042545">
    <property type="term" value="P:cell wall modification"/>
    <property type="evidence" value="ECO:0000318"/>
    <property type="project" value="GO_Central"/>
</dbReference>
<dbReference type="GO" id="GO:0007043">
    <property type="term" value="P:cell-cell junction assembly"/>
    <property type="evidence" value="ECO:0000318"/>
    <property type="project" value="GO_Central"/>
</dbReference>
<dbReference type="InterPro" id="IPR006459">
    <property type="entry name" value="CASP/CASPL"/>
</dbReference>
<dbReference type="InterPro" id="IPR006702">
    <property type="entry name" value="CASP_dom"/>
</dbReference>
<dbReference type="InterPro" id="IPR044173">
    <property type="entry name" value="CASPL"/>
</dbReference>
<dbReference type="NCBIfam" id="TIGR01569">
    <property type="entry name" value="A_tha_TIGR01569"/>
    <property type="match status" value="1"/>
</dbReference>
<dbReference type="PANTHER" id="PTHR36488:SF12">
    <property type="entry name" value="CASP-LIKE PROTEIN"/>
    <property type="match status" value="1"/>
</dbReference>
<dbReference type="PANTHER" id="PTHR36488">
    <property type="entry name" value="CASP-LIKE PROTEIN 1U1"/>
    <property type="match status" value="1"/>
</dbReference>
<dbReference type="Pfam" id="PF04535">
    <property type="entry name" value="CASP_dom"/>
    <property type="match status" value="1"/>
</dbReference>
<feature type="chain" id="PRO_0000417780" description="Casparian strip membrane protein 2">
    <location>
        <begin position="1"/>
        <end position="189"/>
    </location>
</feature>
<feature type="topological domain" description="Cytoplasmic" evidence="2">
    <location>
        <begin position="1"/>
        <end position="25"/>
    </location>
</feature>
<feature type="transmembrane region" description="Helical" evidence="2">
    <location>
        <begin position="26"/>
        <end position="46"/>
    </location>
</feature>
<feature type="topological domain" description="Extracellular" evidence="2">
    <location>
        <begin position="47"/>
        <end position="73"/>
    </location>
</feature>
<feature type="transmembrane region" description="Helical" evidence="2">
    <location>
        <begin position="74"/>
        <end position="94"/>
    </location>
</feature>
<feature type="topological domain" description="Cytoplasmic" evidence="2">
    <location>
        <begin position="95"/>
        <end position="108"/>
    </location>
</feature>
<feature type="transmembrane region" description="Helical" evidence="2">
    <location>
        <begin position="109"/>
        <end position="129"/>
    </location>
</feature>
<feature type="topological domain" description="Extracellular" evidence="2">
    <location>
        <begin position="130"/>
        <end position="163"/>
    </location>
</feature>
<feature type="transmembrane region" description="Helical" evidence="2">
    <location>
        <begin position="164"/>
        <end position="184"/>
    </location>
</feature>
<feature type="topological domain" description="Cytoplasmic" evidence="2">
    <location>
        <begin position="185"/>
        <end position="189"/>
    </location>
</feature>
<feature type="region of interest" description="Disordered" evidence="3">
    <location>
        <begin position="1"/>
        <end position="21"/>
    </location>
</feature>
<sequence>MKVSTIESGEISKGASSPRKGMKRGLSIMDFILRIFAAMSTLGSALSMGTAKQTMPFATRFVRFKVSFHDLPTFLFFVTANSIVCGYLALSLVLSFFHIVRTISVKSRILLVFLDTVMFGLLTSGASAAAAIVYVAHYGNPSANWFPFCQQYNSFCGRISGSLVGSFIAVVIFMILILMSGISISKSKH</sequence>
<reference key="1">
    <citation type="journal article" date="2011" name="Nature">
        <title>The Medicago genome provides insight into the evolution of rhizobial symbioses.</title>
        <authorList>
            <person name="Young N.D."/>
            <person name="Debelle F."/>
            <person name="Oldroyd G.E.D."/>
            <person name="Geurts R."/>
            <person name="Cannon S.B."/>
            <person name="Udvardi M.K."/>
            <person name="Benedito V.A."/>
            <person name="Mayer K.F.X."/>
            <person name="Gouzy J."/>
            <person name="Schoof H."/>
            <person name="Van de Peer Y."/>
            <person name="Proost S."/>
            <person name="Cook D.R."/>
            <person name="Meyers B.C."/>
            <person name="Spannagl M."/>
            <person name="Cheung F."/>
            <person name="De Mita S."/>
            <person name="Krishnakumar V."/>
            <person name="Gundlach H."/>
            <person name="Zhou S."/>
            <person name="Mudge J."/>
            <person name="Bharti A.K."/>
            <person name="Murray J.D."/>
            <person name="Naoumkina M.A."/>
            <person name="Rosen B."/>
            <person name="Silverstein K.A.T."/>
            <person name="Tang H."/>
            <person name="Rombauts S."/>
            <person name="Zhao P.X."/>
            <person name="Zhou P."/>
            <person name="Barbe V."/>
            <person name="Bardou P."/>
            <person name="Bechner M."/>
            <person name="Bellec A."/>
            <person name="Berger A."/>
            <person name="Berges H."/>
            <person name="Bidwell S."/>
            <person name="Bisseling T."/>
            <person name="Choisne N."/>
            <person name="Couloux A."/>
            <person name="Denny R."/>
            <person name="Deshpande S."/>
            <person name="Dai X."/>
            <person name="Doyle J.J."/>
            <person name="Dudez A.-M."/>
            <person name="Farmer A.D."/>
            <person name="Fouteau S."/>
            <person name="Franken C."/>
            <person name="Gibelin C."/>
            <person name="Gish J."/>
            <person name="Goldstein S."/>
            <person name="Gonzalez A.J."/>
            <person name="Green P.J."/>
            <person name="Hallab A."/>
            <person name="Hartog M."/>
            <person name="Hua A."/>
            <person name="Humphray S.J."/>
            <person name="Jeong D.-H."/>
            <person name="Jing Y."/>
            <person name="Jocker A."/>
            <person name="Kenton S.M."/>
            <person name="Kim D.-J."/>
            <person name="Klee K."/>
            <person name="Lai H."/>
            <person name="Lang C."/>
            <person name="Lin S."/>
            <person name="Macmil S.L."/>
            <person name="Magdelenat G."/>
            <person name="Matthews L."/>
            <person name="McCorrison J."/>
            <person name="Monaghan E.L."/>
            <person name="Mun J.-H."/>
            <person name="Najar F.Z."/>
            <person name="Nicholson C."/>
            <person name="Noirot C."/>
            <person name="O'Bleness M."/>
            <person name="Paule C.R."/>
            <person name="Poulain J."/>
            <person name="Prion F."/>
            <person name="Qin B."/>
            <person name="Qu C."/>
            <person name="Retzel E.F."/>
            <person name="Riddle C."/>
            <person name="Sallet E."/>
            <person name="Samain S."/>
            <person name="Samson N."/>
            <person name="Sanders I."/>
            <person name="Saurat O."/>
            <person name="Scarpelli C."/>
            <person name="Schiex T."/>
            <person name="Segurens B."/>
            <person name="Severin A.J."/>
            <person name="Sherrier D.J."/>
            <person name="Shi R."/>
            <person name="Sims S."/>
            <person name="Singer S.R."/>
            <person name="Sinharoy S."/>
            <person name="Sterck L."/>
            <person name="Viollet A."/>
            <person name="Wang B.-B."/>
            <person name="Wang K."/>
            <person name="Wang M."/>
            <person name="Wang X."/>
            <person name="Warfsmann J."/>
            <person name="Weissenbach J."/>
            <person name="White D.D."/>
            <person name="White J.D."/>
            <person name="Wiley G.B."/>
            <person name="Wincker P."/>
            <person name="Xing Y."/>
            <person name="Yang L."/>
            <person name="Yao Z."/>
            <person name="Ying F."/>
            <person name="Zhai J."/>
            <person name="Zhou L."/>
            <person name="Zuber A."/>
            <person name="Denarie J."/>
            <person name="Dixon R.A."/>
            <person name="May G.D."/>
            <person name="Schwartz D.C."/>
            <person name="Rogers J."/>
            <person name="Quetier F."/>
            <person name="Town C.D."/>
            <person name="Roe B.A."/>
        </authorList>
    </citation>
    <scope>NUCLEOTIDE SEQUENCE [LARGE SCALE GENOMIC DNA]</scope>
    <source>
        <strain>cv. Jemalong A17</strain>
    </source>
</reference>
<reference key="2">
    <citation type="journal article" date="2014" name="BMC Genomics">
        <title>An improved genome release (version Mt4.0) for the model legume Medicago truncatula.</title>
        <authorList>
            <person name="Tang H."/>
            <person name="Krishnakumar V."/>
            <person name="Bidwell S."/>
            <person name="Rosen B."/>
            <person name="Chan A."/>
            <person name="Zhou S."/>
            <person name="Gentzbittel L."/>
            <person name="Childs K.L."/>
            <person name="Yandell M."/>
            <person name="Gundlach H."/>
            <person name="Mayer K.F."/>
            <person name="Schwartz D.C."/>
            <person name="Town C.D."/>
        </authorList>
    </citation>
    <scope>GENOME REANNOTATION</scope>
    <source>
        <strain>cv. Jemalong A17</strain>
    </source>
</reference>
<reference key="3">
    <citation type="journal article" date="2014" name="Plant Physiol.">
        <title>Functional and evolutionary analysis of the CASPARIAN STRIP MEMBRANE DOMAIN PROTEIN family.</title>
        <authorList>
            <person name="Roppolo D."/>
            <person name="Boeckmann B."/>
            <person name="Pfister A."/>
            <person name="Boutet E."/>
            <person name="Rubio M.C."/>
            <person name="Denervaud-Tendon V."/>
            <person name="Vermeer J.E."/>
            <person name="Gheyselinck J."/>
            <person name="Xenarios I."/>
            <person name="Geldner N."/>
        </authorList>
    </citation>
    <scope>GENE FAMILY</scope>
    <scope>NOMENCLATURE</scope>
</reference>
<accession>G7JG80</accession>
<proteinExistence type="inferred from homology"/>